<gene>
    <name evidence="1" type="primary">deoB</name>
    <name type="ordered locus">EC55989_5045</name>
</gene>
<keyword id="KW-0963">Cytoplasm</keyword>
<keyword id="KW-0413">Isomerase</keyword>
<keyword id="KW-0464">Manganese</keyword>
<keyword id="KW-0479">Metal-binding</keyword>
<keyword id="KW-1185">Reference proteome</keyword>
<comment type="function">
    <text evidence="1">Isomerase that catalyzes the conversion of deoxy-ribose 1-phosphate (dRib-1-P) and ribose 1-phosphate (Rib-1-P) to deoxy-ribose 5-phosphate (dRib-5-P) and ribose 5-phosphate (Rib-5-P), respectively.</text>
</comment>
<comment type="catalytic activity">
    <reaction evidence="1">
        <text>2-deoxy-alpha-D-ribose 1-phosphate = 2-deoxy-D-ribose 5-phosphate</text>
        <dbReference type="Rhea" id="RHEA:27658"/>
        <dbReference type="ChEBI" id="CHEBI:57259"/>
        <dbReference type="ChEBI" id="CHEBI:62877"/>
        <dbReference type="EC" id="5.4.2.7"/>
    </reaction>
</comment>
<comment type="catalytic activity">
    <reaction evidence="1">
        <text>alpha-D-ribose 1-phosphate = D-ribose 5-phosphate</text>
        <dbReference type="Rhea" id="RHEA:18793"/>
        <dbReference type="ChEBI" id="CHEBI:57720"/>
        <dbReference type="ChEBI" id="CHEBI:78346"/>
        <dbReference type="EC" id="5.4.2.7"/>
    </reaction>
</comment>
<comment type="cofactor">
    <cofactor evidence="1">
        <name>Mn(2+)</name>
        <dbReference type="ChEBI" id="CHEBI:29035"/>
    </cofactor>
    <text evidence="1">Binds 2 manganese ions.</text>
</comment>
<comment type="pathway">
    <text evidence="1">Carbohydrate degradation; 2-deoxy-D-ribose 1-phosphate degradation; D-glyceraldehyde 3-phosphate and acetaldehyde from 2-deoxy-alpha-D-ribose 1-phosphate: step 1/2.</text>
</comment>
<comment type="subcellular location">
    <subcellularLocation>
        <location evidence="1">Cytoplasm</location>
    </subcellularLocation>
</comment>
<comment type="similarity">
    <text evidence="1">Belongs to the phosphopentomutase family.</text>
</comment>
<organism>
    <name type="scientific">Escherichia coli (strain 55989 / EAEC)</name>
    <dbReference type="NCBI Taxonomy" id="585055"/>
    <lineage>
        <taxon>Bacteria</taxon>
        <taxon>Pseudomonadati</taxon>
        <taxon>Pseudomonadota</taxon>
        <taxon>Gammaproteobacteria</taxon>
        <taxon>Enterobacterales</taxon>
        <taxon>Enterobacteriaceae</taxon>
        <taxon>Escherichia</taxon>
    </lineage>
</organism>
<name>DEOB_ECO55</name>
<evidence type="ECO:0000255" key="1">
    <source>
        <dbReference type="HAMAP-Rule" id="MF_00740"/>
    </source>
</evidence>
<proteinExistence type="inferred from homology"/>
<sequence length="407" mass="44370">MKRAFIMVLDSFGIGATEDAERFGDVGADTLGHIAEACAKGEADNGRKGPLNLPNLTRLGLAKAHEGSTGFIPAGMDGNAEVIGAYAWAHEMSSGKDTPSGHWEIAGVPVLFEWGYFSDHENSFPQELLDKLVERANLPGYLGNCHSSGTVILDQLGEEHMKTGKPIFYTSADSVFQIACHEETFGLDKLYELCEIAREELTNGGYNIGRVIARPFIGDKAGNFQRTGNRHDLAVEPPAPTVLQKLVDEKHGQVVSVGKIADIYANCGITKKVKATGLDALFDATIKEMKEAGDNTIVFTNFVDFDSSWGHRRDVAGYAAGLELFDRRLPELMSLLRDDDILILTADHGCDPTWTGTDHTREHIPVLVYGPKVKPGSLGHRETFADIGQTLAKYFGTSDMEYGKAMF</sequence>
<feature type="chain" id="PRO_1000148243" description="Phosphopentomutase">
    <location>
        <begin position="1"/>
        <end position="407"/>
    </location>
</feature>
<feature type="binding site" evidence="1">
    <location>
        <position position="10"/>
    </location>
    <ligand>
        <name>Mn(2+)</name>
        <dbReference type="ChEBI" id="CHEBI:29035"/>
        <label>1</label>
    </ligand>
</feature>
<feature type="binding site" evidence="1">
    <location>
        <position position="306"/>
    </location>
    <ligand>
        <name>Mn(2+)</name>
        <dbReference type="ChEBI" id="CHEBI:29035"/>
        <label>2</label>
    </ligand>
</feature>
<feature type="binding site" evidence="1">
    <location>
        <position position="311"/>
    </location>
    <ligand>
        <name>Mn(2+)</name>
        <dbReference type="ChEBI" id="CHEBI:29035"/>
        <label>2</label>
    </ligand>
</feature>
<feature type="binding site" evidence="1">
    <location>
        <position position="347"/>
    </location>
    <ligand>
        <name>Mn(2+)</name>
        <dbReference type="ChEBI" id="CHEBI:29035"/>
        <label>1</label>
    </ligand>
</feature>
<feature type="binding site" evidence="1">
    <location>
        <position position="348"/>
    </location>
    <ligand>
        <name>Mn(2+)</name>
        <dbReference type="ChEBI" id="CHEBI:29035"/>
        <label>1</label>
    </ligand>
</feature>
<feature type="binding site" evidence="1">
    <location>
        <position position="359"/>
    </location>
    <ligand>
        <name>Mn(2+)</name>
        <dbReference type="ChEBI" id="CHEBI:29035"/>
        <label>2</label>
    </ligand>
</feature>
<dbReference type="EC" id="5.4.2.7" evidence="1"/>
<dbReference type="EMBL" id="CU928145">
    <property type="protein sequence ID" value="CAV02184.1"/>
    <property type="molecule type" value="Genomic_DNA"/>
</dbReference>
<dbReference type="RefSeq" id="WP_000816471.1">
    <property type="nucleotide sequence ID" value="NC_011748.1"/>
</dbReference>
<dbReference type="SMR" id="B7LEM9"/>
<dbReference type="GeneID" id="89519362"/>
<dbReference type="KEGG" id="eck:EC55989_5045"/>
<dbReference type="HOGENOM" id="CLU_053861_0_0_6"/>
<dbReference type="UniPathway" id="UPA00002">
    <property type="reaction ID" value="UER00467"/>
</dbReference>
<dbReference type="Proteomes" id="UP000000746">
    <property type="component" value="Chromosome"/>
</dbReference>
<dbReference type="GO" id="GO:0005829">
    <property type="term" value="C:cytosol"/>
    <property type="evidence" value="ECO:0007669"/>
    <property type="project" value="TreeGrafter"/>
</dbReference>
<dbReference type="GO" id="GO:0000287">
    <property type="term" value="F:magnesium ion binding"/>
    <property type="evidence" value="ECO:0007669"/>
    <property type="project" value="InterPro"/>
</dbReference>
<dbReference type="GO" id="GO:0030145">
    <property type="term" value="F:manganese ion binding"/>
    <property type="evidence" value="ECO:0007669"/>
    <property type="project" value="UniProtKB-UniRule"/>
</dbReference>
<dbReference type="GO" id="GO:0008973">
    <property type="term" value="F:phosphopentomutase activity"/>
    <property type="evidence" value="ECO:0007669"/>
    <property type="project" value="UniProtKB-UniRule"/>
</dbReference>
<dbReference type="GO" id="GO:0006018">
    <property type="term" value="P:2-deoxyribose 1-phosphate catabolic process"/>
    <property type="evidence" value="ECO:0007669"/>
    <property type="project" value="UniProtKB-UniRule"/>
</dbReference>
<dbReference type="GO" id="GO:0006015">
    <property type="term" value="P:5-phosphoribose 1-diphosphate biosynthetic process"/>
    <property type="evidence" value="ECO:0007669"/>
    <property type="project" value="UniProtKB-UniPathway"/>
</dbReference>
<dbReference type="GO" id="GO:0043094">
    <property type="term" value="P:metabolic compound salvage"/>
    <property type="evidence" value="ECO:0007669"/>
    <property type="project" value="InterPro"/>
</dbReference>
<dbReference type="GO" id="GO:0009117">
    <property type="term" value="P:nucleotide metabolic process"/>
    <property type="evidence" value="ECO:0007669"/>
    <property type="project" value="InterPro"/>
</dbReference>
<dbReference type="CDD" id="cd16009">
    <property type="entry name" value="PPM"/>
    <property type="match status" value="1"/>
</dbReference>
<dbReference type="FunFam" id="3.30.70.1250:FF:000001">
    <property type="entry name" value="Phosphopentomutase"/>
    <property type="match status" value="1"/>
</dbReference>
<dbReference type="Gene3D" id="3.40.720.10">
    <property type="entry name" value="Alkaline Phosphatase, subunit A"/>
    <property type="match status" value="1"/>
</dbReference>
<dbReference type="Gene3D" id="3.30.70.1250">
    <property type="entry name" value="Phosphopentomutase"/>
    <property type="match status" value="1"/>
</dbReference>
<dbReference type="HAMAP" id="MF_00740">
    <property type="entry name" value="Phosphopentomut"/>
    <property type="match status" value="1"/>
</dbReference>
<dbReference type="InterPro" id="IPR017850">
    <property type="entry name" value="Alkaline_phosphatase_core_sf"/>
</dbReference>
<dbReference type="InterPro" id="IPR010045">
    <property type="entry name" value="DeoB"/>
</dbReference>
<dbReference type="InterPro" id="IPR006124">
    <property type="entry name" value="Metalloenzyme"/>
</dbReference>
<dbReference type="InterPro" id="IPR024052">
    <property type="entry name" value="Phosphopentomutase_DeoB_cap_sf"/>
</dbReference>
<dbReference type="NCBIfam" id="TIGR01696">
    <property type="entry name" value="deoB"/>
    <property type="match status" value="1"/>
</dbReference>
<dbReference type="NCBIfam" id="NF003766">
    <property type="entry name" value="PRK05362.1"/>
    <property type="match status" value="1"/>
</dbReference>
<dbReference type="PANTHER" id="PTHR21110">
    <property type="entry name" value="PHOSPHOPENTOMUTASE"/>
    <property type="match status" value="1"/>
</dbReference>
<dbReference type="PANTHER" id="PTHR21110:SF0">
    <property type="entry name" value="PHOSPHOPENTOMUTASE"/>
    <property type="match status" value="1"/>
</dbReference>
<dbReference type="Pfam" id="PF01676">
    <property type="entry name" value="Metalloenzyme"/>
    <property type="match status" value="1"/>
</dbReference>
<dbReference type="PIRSF" id="PIRSF001491">
    <property type="entry name" value="Ppentomutase"/>
    <property type="match status" value="1"/>
</dbReference>
<dbReference type="SUPFAM" id="SSF53649">
    <property type="entry name" value="Alkaline phosphatase-like"/>
    <property type="match status" value="1"/>
</dbReference>
<dbReference type="SUPFAM" id="SSF143856">
    <property type="entry name" value="DeoB insert domain-like"/>
    <property type="match status" value="1"/>
</dbReference>
<protein>
    <recommendedName>
        <fullName evidence="1">Phosphopentomutase</fullName>
        <ecNumber evidence="1">5.4.2.7</ecNumber>
    </recommendedName>
    <alternativeName>
        <fullName evidence="1">Phosphodeoxyribomutase</fullName>
    </alternativeName>
</protein>
<accession>B7LEM9</accession>
<reference key="1">
    <citation type="journal article" date="2009" name="PLoS Genet.">
        <title>Organised genome dynamics in the Escherichia coli species results in highly diverse adaptive paths.</title>
        <authorList>
            <person name="Touchon M."/>
            <person name="Hoede C."/>
            <person name="Tenaillon O."/>
            <person name="Barbe V."/>
            <person name="Baeriswyl S."/>
            <person name="Bidet P."/>
            <person name="Bingen E."/>
            <person name="Bonacorsi S."/>
            <person name="Bouchier C."/>
            <person name="Bouvet O."/>
            <person name="Calteau A."/>
            <person name="Chiapello H."/>
            <person name="Clermont O."/>
            <person name="Cruveiller S."/>
            <person name="Danchin A."/>
            <person name="Diard M."/>
            <person name="Dossat C."/>
            <person name="Karoui M.E."/>
            <person name="Frapy E."/>
            <person name="Garry L."/>
            <person name="Ghigo J.M."/>
            <person name="Gilles A.M."/>
            <person name="Johnson J."/>
            <person name="Le Bouguenec C."/>
            <person name="Lescat M."/>
            <person name="Mangenot S."/>
            <person name="Martinez-Jehanne V."/>
            <person name="Matic I."/>
            <person name="Nassif X."/>
            <person name="Oztas S."/>
            <person name="Petit M.A."/>
            <person name="Pichon C."/>
            <person name="Rouy Z."/>
            <person name="Ruf C.S."/>
            <person name="Schneider D."/>
            <person name="Tourret J."/>
            <person name="Vacherie B."/>
            <person name="Vallenet D."/>
            <person name="Medigue C."/>
            <person name="Rocha E.P.C."/>
            <person name="Denamur E."/>
        </authorList>
    </citation>
    <scope>NUCLEOTIDE SEQUENCE [LARGE SCALE GENOMIC DNA]</scope>
    <source>
        <strain>55989 / EAEC</strain>
    </source>
</reference>